<feature type="chain" id="PRO_0000457421" description="RNA polymerase-associated transcription-specificity factor RAP94">
    <location>
        <begin position="1"/>
        <end position="795"/>
    </location>
</feature>
<proteinExistence type="evidence at transcript level"/>
<organism>
    <name type="scientific">Monkeypox virus</name>
    <dbReference type="NCBI Taxonomy" id="10244"/>
    <lineage>
        <taxon>Viruses</taxon>
        <taxon>Varidnaviria</taxon>
        <taxon>Bamfordvirae</taxon>
        <taxon>Nucleocytoviricota</taxon>
        <taxon>Pokkesviricetes</taxon>
        <taxon>Chitovirales</taxon>
        <taxon>Poxviridae</taxon>
        <taxon>Chordopoxvirinae</taxon>
        <taxon>Orthopoxvirus</taxon>
    </lineage>
</organism>
<keyword id="KW-1185">Reference proteome</keyword>
<keyword id="KW-0804">Transcription</keyword>
<keyword id="KW-0805">Transcription regulation</keyword>
<keyword id="KW-0806">Transcription termination</keyword>
<keyword id="KW-0946">Virion</keyword>
<protein>
    <recommendedName>
        <fullName>RNA polymerase-associated transcription-specificity factor RAP94</fullName>
    </recommendedName>
    <alternativeName>
        <fullName>Protein H4</fullName>
    </alternativeName>
    <alternativeName>
        <fullName>RPO-associated protein of 94 kDa</fullName>
    </alternativeName>
</protein>
<dbReference type="EMBL" id="MT903340">
    <property type="protein sequence ID" value="QNP12964.1"/>
    <property type="molecule type" value="Genomic_DNA"/>
</dbReference>
<dbReference type="RefSeq" id="YP_010377091.1">
    <property type="nucleotide sequence ID" value="NC_063383.1"/>
</dbReference>
<dbReference type="SMR" id="A0A7H0DN81"/>
<dbReference type="GeneID" id="72551504"/>
<dbReference type="Proteomes" id="UP000516359">
    <property type="component" value="Genome"/>
</dbReference>
<dbReference type="GO" id="GO:0044423">
    <property type="term" value="C:virion component"/>
    <property type="evidence" value="ECO:0007669"/>
    <property type="project" value="UniProtKB-KW"/>
</dbReference>
<dbReference type="GO" id="GO:0003700">
    <property type="term" value="F:DNA-binding transcription factor activity"/>
    <property type="evidence" value="ECO:0007669"/>
    <property type="project" value="InterPro"/>
</dbReference>
<dbReference type="GO" id="GO:0006353">
    <property type="term" value="P:DNA-templated transcription termination"/>
    <property type="evidence" value="ECO:0007669"/>
    <property type="project" value="UniProtKB-KW"/>
</dbReference>
<dbReference type="InterPro" id="IPR004974">
    <property type="entry name" value="Pox_Rap94"/>
</dbReference>
<dbReference type="Pfam" id="PF03294">
    <property type="entry name" value="Pox_Rap94"/>
    <property type="match status" value="1"/>
</dbReference>
<organismHost>
    <name type="scientific">Cynomys gunnisoni</name>
    <name type="common">Gunnison's prairie dog</name>
    <name type="synonym">Spermophilus gunnisoni</name>
    <dbReference type="NCBI Taxonomy" id="45479"/>
</organismHost>
<organismHost>
    <name type="scientific">Cynomys leucurus</name>
    <name type="common">White-tailed prairie dog</name>
    <dbReference type="NCBI Taxonomy" id="99825"/>
</organismHost>
<organismHost>
    <name type="scientific">Cynomys ludovicianus</name>
    <name type="common">Black-tailed prairie dog</name>
    <dbReference type="NCBI Taxonomy" id="45480"/>
</organismHost>
<organismHost>
    <name type="scientific">Cynomys mexicanus</name>
    <name type="common">Mexican prairie dog</name>
    <dbReference type="NCBI Taxonomy" id="99826"/>
</organismHost>
<organismHost>
    <name type="scientific">Cynomys parvidens</name>
    <name type="common">Utah prairie dog</name>
    <dbReference type="NCBI Taxonomy" id="99827"/>
</organismHost>
<organismHost>
    <name type="scientific">Gliridae</name>
    <name type="common">dormice</name>
    <dbReference type="NCBI Taxonomy" id="30650"/>
</organismHost>
<organismHost>
    <name type="scientific">Heliosciurus ruwenzorii</name>
    <name type="common">Ruwenzori sun squirrel</name>
    <dbReference type="NCBI Taxonomy" id="226685"/>
</organismHost>
<organismHost>
    <name type="scientific">Homo sapiens</name>
    <name type="common">Human</name>
    <dbReference type="NCBI Taxonomy" id="9606"/>
</organismHost>
<organismHost>
    <name type="scientific">Mus musculus</name>
    <name type="common">Mouse</name>
    <dbReference type="NCBI Taxonomy" id="10090"/>
</organismHost>
<gene>
    <name type="primary">OPG109</name>
    <name type="synonym">RAP94</name>
    <name type="ORF">MPXVgp094</name>
</gene>
<evidence type="ECO:0000250" key="1">
    <source>
        <dbReference type="UniProtKB" id="P68438"/>
    </source>
</evidence>
<evidence type="ECO:0000305" key="2"/>
<comment type="function">
    <text evidence="1">DNA-directed RNA polymerase-associated factor required for the transcription of viral early genes as well as for transcription termination. Within minutes after virus entry, recruits the core RNA polymerase, the early transcription factor (ETF) and other enzymes needed for transcription initiation, elongation, and termination thereby allowing synthesis of early mRNAs which are extruded through pores in the core particle. Recruits the multifunctional OPG102 protein, with poly(A) polymerase-stimulatory, cap nucleoside-2'-O-methyltransferase, and transcription elongation activities. Interacts with nucleoside triphosphatase I/OPG123, a DNA-dependent ATPase required for the termination of early transcripts. Acts as a transcription termination factor by binding, together with the capping enzyme/VTF, to the termination motif 5'-UUUUUNU-3' in the nascent mRNA. Involved as well in the packaging of RNA polymerase and other components needed for early transcription in assembling virus particles.</text>
</comment>
<comment type="subunit">
    <text evidence="1">Part of the early transcription complex composed of ETF, RAP94/OPG109, and the DNA-directed RNA polymerase. Interacts (via N-terminus) with nucleoside triphosphatase I/OPG123. Interacts with OPG102. Interacts with ETF heterodimer.</text>
</comment>
<comment type="subcellular location">
    <subcellularLocation>
        <location evidence="1">Virion</location>
    </subcellularLocation>
    <text evidence="1">All the enzymes and other proteins required to synthesize early mRNAs are packaged within the virion core along with the DNA genome.</text>
</comment>
<comment type="induction">
    <text>Expressed in the late phase of the viral replicative cycle.</text>
</comment>
<comment type="domain">
    <text evidence="1">Interacts with ETF via its N-terminus and with DNA-directed RNA polymerase via its C-terminus.</text>
</comment>
<comment type="similarity">
    <text evidence="2">Belongs to the poxviridae protein RAP94 family.</text>
</comment>
<sequence length="795" mass="93731">MDSKETILIEIIPKIKSYLLDTNISPKSYNDFISRNKNIFVINLYNVSTITEEDIRLLYTTIEQNIDADDQTLVAIFSYIGYKFEQTVKEEISTSLSFNDKNTTDEMTYNLYDLFFNTLDMYLRQKKISILVNDDVRGDVIVSYKNSDLVSSFNAELEPEIKKIPFNMKNLLPYLEKNLDQLRFSKKYLDFAYLCRHIGIPISKKKYNMRYVFLYKIDGLSIPIIIKDFLDIKYVYLENTGKIYKNSFSEDHNNSLSDWGKVIIPLLKDRHLYSYIFLSSYHLHSYYTDLIARDEPVFVKRKKLDIIEIDEPEAWKRDVRVEFAPCEHQIRLKEAMKVDANYFTKINNFANEFIYYEDGVAYCRVCGINIPIFNLDAADVIKNTVIVSTFNKTIFLSEPYSYFVHSQRFIFNIIMSFDNIMKSQTWVMKYNINRLILNFLIDINSRRQEYEKKFSSEIKRGLFFLRLSANLFESQVSSTELFYVSKMLNLNYIVALVIILNSSADFIVSYMKSKNKTVEESTLKYAISVVIYDFLVKTRICEKGSLDTIVLFTDVYTSIMPEELDLHFQRITLELRKLVSIQRSALEPNYDVESRGEELPLSALKFFDTSTIIVKTMAPIHACIKQKIVAPTPSVKPTDASLKNFKELTCDEDIKILIRVHDTNATKLVIFPSHLKIEIERKKLIIPLKSLYITNTLKYYYSNSYLYVFRFGDPMPFEEELIDHEHVQYKINCYNILRYHLLPDSDVFVYFSNSLNREALEYAFYIFLSKYVNVKQWIDENITRIRELYMINFNN</sequence>
<reference key="1">
    <citation type="journal article" date="2022" name="J. Infect. Dis.">
        <title>Exportation of Monkeypox virus from the African continent.</title>
        <authorList>
            <person name="Mauldin M.R."/>
            <person name="McCollum A.M."/>
            <person name="Nakazawa Y.J."/>
            <person name="Mandra A."/>
            <person name="Whitehouse E.R."/>
            <person name="Davidson W."/>
            <person name="Zhao H."/>
            <person name="Gao J."/>
            <person name="Li Y."/>
            <person name="Doty J."/>
            <person name="Yinka-Ogunleye A."/>
            <person name="Akinpelu A."/>
            <person name="Aruna O."/>
            <person name="Naidoo D."/>
            <person name="Lewandowski K."/>
            <person name="Afrough B."/>
            <person name="Graham V."/>
            <person name="Aarons E."/>
            <person name="Hewson R."/>
            <person name="Vipond R."/>
            <person name="Dunning J."/>
            <person name="Chand M."/>
            <person name="Brown C."/>
            <person name="Cohen-Gihon I."/>
            <person name="Erez N."/>
            <person name="Shifman O."/>
            <person name="Israeli O."/>
            <person name="Sharon M."/>
            <person name="Schwartz E."/>
            <person name="Beth-Din A."/>
            <person name="Zvi A."/>
            <person name="Mak T.M."/>
            <person name="Ng Y.K."/>
            <person name="Cui L."/>
            <person name="Lin R.T.P."/>
            <person name="Olson V.A."/>
            <person name="Brooks T."/>
            <person name="Paran N."/>
            <person name="Ihekweazu C."/>
            <person name="Reynolds M.G."/>
        </authorList>
    </citation>
    <scope>NUCLEOTIDE SEQUENCE [LARGE SCALE GENOMIC DNA]</scope>
    <source>
        <strain>MPXV-M5312_HM12_Rivers</strain>
    </source>
</reference>
<accession>A0A7H0DN81</accession>
<name>RAP94_MONPV</name>